<feature type="chain" id="PRO_0000120056" description="Thioredoxin H-type">
    <location>
        <begin position="1"/>
        <end position="116"/>
    </location>
</feature>
<feature type="domain" description="Thioredoxin" evidence="2">
    <location>
        <begin position="2"/>
        <end position="115"/>
    </location>
</feature>
<feature type="active site" description="Nucleophile" evidence="1">
    <location>
        <position position="39"/>
    </location>
</feature>
<feature type="active site" description="Nucleophile" evidence="1">
    <location>
        <position position="42"/>
    </location>
</feature>
<feature type="site" description="Deprotonates C-terminal active site Cys" evidence="1">
    <location>
        <position position="33"/>
    </location>
</feature>
<feature type="site" description="Contributes to redox potential value" evidence="1">
    <location>
        <position position="40"/>
    </location>
</feature>
<feature type="site" description="Contributes to redox potential value" evidence="1">
    <location>
        <position position="41"/>
    </location>
</feature>
<feature type="disulfide bond" description="Redox-active" evidence="2">
    <location>
        <begin position="39"/>
        <end position="42"/>
    </location>
</feature>
<reference key="1">
    <citation type="submission" date="1996-09" db="EMBL/GenBank/DDBJ databases">
        <title>Buckwheat cDNA from immature seeds.</title>
        <authorList>
            <person name="Fujino K."/>
            <person name="Funatsuki H."/>
            <person name="Kikuta Y."/>
        </authorList>
    </citation>
    <scope>NUCLEOTIDE SEQUENCE [MRNA]</scope>
    <source>
        <strain>cv. Kitayuki</strain>
    </source>
</reference>
<dbReference type="EMBL" id="D87984">
    <property type="protein sequence ID" value="BAA13524.1"/>
    <property type="molecule type" value="mRNA"/>
</dbReference>
<dbReference type="PIR" id="T10739">
    <property type="entry name" value="T10739"/>
</dbReference>
<dbReference type="SMR" id="Q96419"/>
<dbReference type="GO" id="GO:0005737">
    <property type="term" value="C:cytoplasm"/>
    <property type="evidence" value="ECO:0007669"/>
    <property type="project" value="UniProtKB-SubCell"/>
</dbReference>
<dbReference type="CDD" id="cd02947">
    <property type="entry name" value="TRX_family"/>
    <property type="match status" value="1"/>
</dbReference>
<dbReference type="FunFam" id="3.40.30.10:FF:000104">
    <property type="entry name" value="Thioredoxin"/>
    <property type="match status" value="1"/>
</dbReference>
<dbReference type="Gene3D" id="3.40.30.10">
    <property type="entry name" value="Glutaredoxin"/>
    <property type="match status" value="1"/>
</dbReference>
<dbReference type="InterPro" id="IPR036249">
    <property type="entry name" value="Thioredoxin-like_sf"/>
</dbReference>
<dbReference type="InterPro" id="IPR017937">
    <property type="entry name" value="Thioredoxin_CS"/>
</dbReference>
<dbReference type="InterPro" id="IPR013766">
    <property type="entry name" value="Thioredoxin_domain"/>
</dbReference>
<dbReference type="InterPro" id="IPR050620">
    <property type="entry name" value="Thioredoxin_H-type-like"/>
</dbReference>
<dbReference type="PANTHER" id="PTHR10438">
    <property type="entry name" value="THIOREDOXIN"/>
    <property type="match status" value="1"/>
</dbReference>
<dbReference type="PANTHER" id="PTHR10438:SF453">
    <property type="entry name" value="THIOREDOXIN H4-RELATED"/>
    <property type="match status" value="1"/>
</dbReference>
<dbReference type="Pfam" id="PF00085">
    <property type="entry name" value="Thioredoxin"/>
    <property type="match status" value="1"/>
</dbReference>
<dbReference type="PRINTS" id="PR00421">
    <property type="entry name" value="THIOREDOXIN"/>
</dbReference>
<dbReference type="SUPFAM" id="SSF52833">
    <property type="entry name" value="Thioredoxin-like"/>
    <property type="match status" value="1"/>
</dbReference>
<dbReference type="PROSITE" id="PS00194">
    <property type="entry name" value="THIOREDOXIN_1"/>
    <property type="match status" value="1"/>
</dbReference>
<dbReference type="PROSITE" id="PS51352">
    <property type="entry name" value="THIOREDOXIN_2"/>
    <property type="match status" value="1"/>
</dbReference>
<protein>
    <recommendedName>
        <fullName>Thioredoxin H-type</fullName>
        <shortName>Trx-H</shortName>
    </recommendedName>
</protein>
<evidence type="ECO:0000250" key="1"/>
<evidence type="ECO:0000255" key="2">
    <source>
        <dbReference type="PROSITE-ProRule" id="PRU00691"/>
    </source>
</evidence>
<evidence type="ECO:0000305" key="3"/>
<comment type="function">
    <text evidence="1">Participates in various redox reactions through the reversible oxidation of the active center dithiol to a disulfide. The H form is known to activate a number of cytosolic enzymes (By similarity).</text>
</comment>
<comment type="subcellular location">
    <subcellularLocation>
        <location evidence="1">Cytoplasm</location>
    </subcellularLocation>
</comment>
<comment type="similarity">
    <text evidence="3">Belongs to the thioredoxin family. Plant H-type subfamily.</text>
</comment>
<accession>Q96419</accession>
<keyword id="KW-0963">Cytoplasm</keyword>
<keyword id="KW-1015">Disulfide bond</keyword>
<keyword id="KW-0249">Electron transport</keyword>
<keyword id="KW-0676">Redox-active center</keyword>
<keyword id="KW-0813">Transport</keyword>
<proteinExistence type="inferred from homology"/>
<organism>
    <name type="scientific">Fagopyrum esculentum</name>
    <name type="common">Common buckwheat</name>
    <name type="synonym">Polygonum fagopyrum</name>
    <dbReference type="NCBI Taxonomy" id="3617"/>
    <lineage>
        <taxon>Eukaryota</taxon>
        <taxon>Viridiplantae</taxon>
        <taxon>Streptophyta</taxon>
        <taxon>Embryophyta</taxon>
        <taxon>Tracheophyta</taxon>
        <taxon>Spermatophyta</taxon>
        <taxon>Magnoliopsida</taxon>
        <taxon>eudicotyledons</taxon>
        <taxon>Gunneridae</taxon>
        <taxon>Pentapetalae</taxon>
        <taxon>Caryophyllales</taxon>
        <taxon>Polygonaceae</taxon>
        <taxon>Polygonoideae</taxon>
        <taxon>Fagopyreae</taxon>
        <taxon>Fagopyrum</taxon>
    </lineage>
</organism>
<sequence>MAEEAQVIACHTVQEWNEKFQKAKDSGKLIVIDFTASWCGPCRVITPYVSELAKKFPHVAFFKVDVDDLKDVAEEYKVEAMPSFVILKEGQEVERIVGARKDELLHKIAVHAPITA</sequence>
<name>TRXH_FAGES</name>